<gene>
    <name evidence="1" type="primary">nadD</name>
    <name type="ordered locus">SPAB_02905</name>
</gene>
<dbReference type="EC" id="2.7.7.18" evidence="1"/>
<dbReference type="EMBL" id="CP000886">
    <property type="protein sequence ID" value="ABX68269.1"/>
    <property type="status" value="ALT_INIT"/>
    <property type="molecule type" value="Genomic_DNA"/>
</dbReference>
<dbReference type="RefSeq" id="WP_001518902.1">
    <property type="nucleotide sequence ID" value="NC_010102.1"/>
</dbReference>
<dbReference type="SMR" id="A9MUK6"/>
<dbReference type="KEGG" id="spq:SPAB_02905"/>
<dbReference type="PATRIC" id="fig|1016998.12.peg.2738"/>
<dbReference type="HOGENOM" id="CLU_069765_0_0_6"/>
<dbReference type="BioCyc" id="SENT1016998:SPAB_RS11835-MONOMER"/>
<dbReference type="UniPathway" id="UPA00253">
    <property type="reaction ID" value="UER00332"/>
</dbReference>
<dbReference type="Proteomes" id="UP000008556">
    <property type="component" value="Chromosome"/>
</dbReference>
<dbReference type="GO" id="GO:0005524">
    <property type="term" value="F:ATP binding"/>
    <property type="evidence" value="ECO:0007669"/>
    <property type="project" value="UniProtKB-KW"/>
</dbReference>
<dbReference type="GO" id="GO:0004515">
    <property type="term" value="F:nicotinate-nucleotide adenylyltransferase activity"/>
    <property type="evidence" value="ECO:0007669"/>
    <property type="project" value="UniProtKB-UniRule"/>
</dbReference>
<dbReference type="GO" id="GO:0009435">
    <property type="term" value="P:NAD biosynthetic process"/>
    <property type="evidence" value="ECO:0007669"/>
    <property type="project" value="UniProtKB-UniRule"/>
</dbReference>
<dbReference type="CDD" id="cd02165">
    <property type="entry name" value="NMNAT"/>
    <property type="match status" value="1"/>
</dbReference>
<dbReference type="FunFam" id="3.40.50.620:FF:000039">
    <property type="entry name" value="Probable nicotinate-nucleotide adenylyltransferase"/>
    <property type="match status" value="1"/>
</dbReference>
<dbReference type="Gene3D" id="3.40.50.620">
    <property type="entry name" value="HUPs"/>
    <property type="match status" value="1"/>
</dbReference>
<dbReference type="HAMAP" id="MF_00244">
    <property type="entry name" value="NaMN_adenylyltr"/>
    <property type="match status" value="1"/>
</dbReference>
<dbReference type="InterPro" id="IPR004821">
    <property type="entry name" value="Cyt_trans-like"/>
</dbReference>
<dbReference type="InterPro" id="IPR005248">
    <property type="entry name" value="NadD/NMNAT"/>
</dbReference>
<dbReference type="InterPro" id="IPR014729">
    <property type="entry name" value="Rossmann-like_a/b/a_fold"/>
</dbReference>
<dbReference type="NCBIfam" id="TIGR00125">
    <property type="entry name" value="cyt_tran_rel"/>
    <property type="match status" value="1"/>
</dbReference>
<dbReference type="NCBIfam" id="TIGR00482">
    <property type="entry name" value="nicotinate (nicotinamide) nucleotide adenylyltransferase"/>
    <property type="match status" value="1"/>
</dbReference>
<dbReference type="NCBIfam" id="NF000839">
    <property type="entry name" value="PRK00071.1-1"/>
    <property type="match status" value="1"/>
</dbReference>
<dbReference type="NCBIfam" id="NF000840">
    <property type="entry name" value="PRK00071.1-3"/>
    <property type="match status" value="1"/>
</dbReference>
<dbReference type="PANTHER" id="PTHR39321">
    <property type="entry name" value="NICOTINATE-NUCLEOTIDE ADENYLYLTRANSFERASE-RELATED"/>
    <property type="match status" value="1"/>
</dbReference>
<dbReference type="PANTHER" id="PTHR39321:SF3">
    <property type="entry name" value="PHOSPHOPANTETHEINE ADENYLYLTRANSFERASE"/>
    <property type="match status" value="1"/>
</dbReference>
<dbReference type="Pfam" id="PF01467">
    <property type="entry name" value="CTP_transf_like"/>
    <property type="match status" value="1"/>
</dbReference>
<dbReference type="SUPFAM" id="SSF52374">
    <property type="entry name" value="Nucleotidylyl transferase"/>
    <property type="match status" value="1"/>
</dbReference>
<evidence type="ECO:0000255" key="1">
    <source>
        <dbReference type="HAMAP-Rule" id="MF_00244"/>
    </source>
</evidence>
<evidence type="ECO:0000305" key="2"/>
<sequence>MKSLQALFGGTFDPVHYGHLKPVETLANLIGLSRVIIMPNNVPPHRPQPEASSAQRKYMLELAIADKPLFTLDERELQRNAPSYTAQTLKAWREEQGPEAPLAFIIGQDSLLNFPTWHDYDTILDNTHLIVCRRPGYPLEMTQAQHQQWLEQHLTHTPDDLHQLPAGKIYLAETPWLNISATLIRERLEKGESCDDLLPENVLNYINQQGLYR</sequence>
<reference key="1">
    <citation type="submission" date="2007-11" db="EMBL/GenBank/DDBJ databases">
        <authorList>
            <consortium name="The Salmonella enterica serovar Paratyphi B Genome Sequencing Project"/>
            <person name="McClelland M."/>
            <person name="Sanderson E.K."/>
            <person name="Porwollik S."/>
            <person name="Spieth J."/>
            <person name="Clifton W.S."/>
            <person name="Fulton R."/>
            <person name="Cordes M."/>
            <person name="Wollam A."/>
            <person name="Shah N."/>
            <person name="Pepin K."/>
            <person name="Bhonagiri V."/>
            <person name="Nash W."/>
            <person name="Johnson M."/>
            <person name="Thiruvilangam P."/>
            <person name="Wilson R."/>
        </authorList>
    </citation>
    <scope>NUCLEOTIDE SEQUENCE [LARGE SCALE GENOMIC DNA]</scope>
    <source>
        <strain>ATCC BAA-1250 / SPB7</strain>
    </source>
</reference>
<feature type="chain" id="PRO_0000336736" description="Probable nicotinate-nucleotide adenylyltransferase">
    <location>
        <begin position="1"/>
        <end position="213"/>
    </location>
</feature>
<accession>A9MUK6</accession>
<protein>
    <recommendedName>
        <fullName evidence="1">Probable nicotinate-nucleotide adenylyltransferase</fullName>
        <ecNumber evidence="1">2.7.7.18</ecNumber>
    </recommendedName>
    <alternativeName>
        <fullName evidence="1">Deamido-NAD(+) diphosphorylase</fullName>
    </alternativeName>
    <alternativeName>
        <fullName evidence="1">Deamido-NAD(+) pyrophosphorylase</fullName>
    </alternativeName>
    <alternativeName>
        <fullName evidence="1">Nicotinate mononucleotide adenylyltransferase</fullName>
        <shortName evidence="1">NaMN adenylyltransferase</shortName>
    </alternativeName>
</protein>
<comment type="function">
    <text evidence="1">Catalyzes the reversible adenylation of nicotinate mononucleotide (NaMN) to nicotinic acid adenine dinucleotide (NaAD).</text>
</comment>
<comment type="catalytic activity">
    <reaction evidence="1">
        <text>nicotinate beta-D-ribonucleotide + ATP + H(+) = deamido-NAD(+) + diphosphate</text>
        <dbReference type="Rhea" id="RHEA:22860"/>
        <dbReference type="ChEBI" id="CHEBI:15378"/>
        <dbReference type="ChEBI" id="CHEBI:30616"/>
        <dbReference type="ChEBI" id="CHEBI:33019"/>
        <dbReference type="ChEBI" id="CHEBI:57502"/>
        <dbReference type="ChEBI" id="CHEBI:58437"/>
        <dbReference type="EC" id="2.7.7.18"/>
    </reaction>
</comment>
<comment type="pathway">
    <text evidence="1">Cofactor biosynthesis; NAD(+) biosynthesis; deamido-NAD(+) from nicotinate D-ribonucleotide: step 1/1.</text>
</comment>
<comment type="similarity">
    <text evidence="1">Belongs to the NadD family.</text>
</comment>
<comment type="sequence caution" evidence="2">
    <conflict type="erroneous initiation">
        <sequence resource="EMBL-CDS" id="ABX68269"/>
    </conflict>
</comment>
<name>NADD_SALPB</name>
<keyword id="KW-0067">ATP-binding</keyword>
<keyword id="KW-0520">NAD</keyword>
<keyword id="KW-0547">Nucleotide-binding</keyword>
<keyword id="KW-0548">Nucleotidyltransferase</keyword>
<keyword id="KW-0662">Pyridine nucleotide biosynthesis</keyword>
<keyword id="KW-0808">Transferase</keyword>
<proteinExistence type="inferred from homology"/>
<organism>
    <name type="scientific">Salmonella paratyphi B (strain ATCC BAA-1250 / SPB7)</name>
    <dbReference type="NCBI Taxonomy" id="1016998"/>
    <lineage>
        <taxon>Bacteria</taxon>
        <taxon>Pseudomonadati</taxon>
        <taxon>Pseudomonadota</taxon>
        <taxon>Gammaproteobacteria</taxon>
        <taxon>Enterobacterales</taxon>
        <taxon>Enterobacteriaceae</taxon>
        <taxon>Salmonella</taxon>
    </lineage>
</organism>